<protein>
    <recommendedName>
        <fullName evidence="10">Glutamate dehydrogenase 2, mitochondrial</fullName>
        <shortName>OsGDH2</shortName>
        <ecNumber evidence="2">1.4.1.3</ecNumber>
    </recommendedName>
</protein>
<evidence type="ECO:0000255" key="1"/>
<evidence type="ECO:0000255" key="2">
    <source>
        <dbReference type="PROSITE-ProRule" id="PRU10011"/>
    </source>
</evidence>
<evidence type="ECO:0000269" key="3">
    <source>
    </source>
</evidence>
<evidence type="ECO:0000269" key="4">
    <source>
    </source>
</evidence>
<evidence type="ECO:0000269" key="5">
    <source>
    </source>
</evidence>
<evidence type="ECO:0000269" key="6">
    <source>
    </source>
</evidence>
<evidence type="ECO:0000269" key="7">
    <source>
    </source>
</evidence>
<evidence type="ECO:0000269" key="8">
    <source>
    </source>
</evidence>
<evidence type="ECO:0000269" key="9">
    <source>
    </source>
</evidence>
<evidence type="ECO:0000305" key="10"/>
<evidence type="ECO:0000312" key="11">
    <source>
        <dbReference type="EMBL" id="BAS90319.1"/>
    </source>
</evidence>
<name>DHE2_ORYSJ</name>
<accession>Q33E23</accession>
<accession>B9FGE7</accession>
<reference key="1">
    <citation type="journal article" date="2005" name="Plant Cell Physiol.">
        <title>Localization of NAD-isocitrate dehydrogenase and glutamate dehydrogenase in rice roots: candidates for providing carbon skeletons to NADH-glutamate synthase.</title>
        <authorList>
            <person name="Abiko T."/>
            <person name="Obara M."/>
            <person name="Ushioda A."/>
            <person name="Hayakawa T."/>
            <person name="Hodges M."/>
            <person name="Yamaya T."/>
        </authorList>
    </citation>
    <scope>NUCLEOTIDE SEQUENCE [MRNA]</scope>
    <scope>TISSUE SPECIFICITY</scope>
    <scope>INDUCTION BY INORGANIC NITROGEN</scope>
    <scope>DEVELOPMENTAL STAGE</scope>
    <source>
        <strain>cv. Sasanishiki</strain>
        <tissue>Root</tissue>
    </source>
</reference>
<reference key="2">
    <citation type="journal article" date="2005" name="Nature">
        <title>The map-based sequence of the rice genome.</title>
        <authorList>
            <consortium name="International rice genome sequencing project (IRGSP)"/>
        </authorList>
    </citation>
    <scope>NUCLEOTIDE SEQUENCE [LARGE SCALE GENOMIC DNA]</scope>
    <source>
        <strain>cv. Nipponbare</strain>
    </source>
</reference>
<reference key="3">
    <citation type="journal article" date="2013" name="Rice">
        <title>Improvement of the Oryza sativa Nipponbare reference genome using next generation sequence and optical map data.</title>
        <authorList>
            <person name="Kawahara Y."/>
            <person name="de la Bastide M."/>
            <person name="Hamilton J.P."/>
            <person name="Kanamori H."/>
            <person name="McCombie W.R."/>
            <person name="Ouyang S."/>
            <person name="Schwartz D.C."/>
            <person name="Tanaka T."/>
            <person name="Wu J."/>
            <person name="Zhou S."/>
            <person name="Childs K.L."/>
            <person name="Davidson R.M."/>
            <person name="Lin H."/>
            <person name="Quesada-Ocampo L."/>
            <person name="Vaillancourt B."/>
            <person name="Sakai H."/>
            <person name="Lee S.S."/>
            <person name="Kim J."/>
            <person name="Numa H."/>
            <person name="Itoh T."/>
            <person name="Buell C.R."/>
            <person name="Matsumoto T."/>
        </authorList>
    </citation>
    <scope>GENOME REANNOTATION</scope>
    <source>
        <strain>cv. Nipponbare</strain>
    </source>
</reference>
<reference key="4">
    <citation type="journal article" date="2005" name="PLoS Biol.">
        <title>The genomes of Oryza sativa: a history of duplications.</title>
        <authorList>
            <person name="Yu J."/>
            <person name="Wang J."/>
            <person name="Lin W."/>
            <person name="Li S."/>
            <person name="Li H."/>
            <person name="Zhou J."/>
            <person name="Ni P."/>
            <person name="Dong W."/>
            <person name="Hu S."/>
            <person name="Zeng C."/>
            <person name="Zhang J."/>
            <person name="Zhang Y."/>
            <person name="Li R."/>
            <person name="Xu Z."/>
            <person name="Li S."/>
            <person name="Li X."/>
            <person name="Zheng H."/>
            <person name="Cong L."/>
            <person name="Lin L."/>
            <person name="Yin J."/>
            <person name="Geng J."/>
            <person name="Li G."/>
            <person name="Shi J."/>
            <person name="Liu J."/>
            <person name="Lv H."/>
            <person name="Li J."/>
            <person name="Wang J."/>
            <person name="Deng Y."/>
            <person name="Ran L."/>
            <person name="Shi X."/>
            <person name="Wang X."/>
            <person name="Wu Q."/>
            <person name="Li C."/>
            <person name="Ren X."/>
            <person name="Wang J."/>
            <person name="Wang X."/>
            <person name="Li D."/>
            <person name="Liu D."/>
            <person name="Zhang X."/>
            <person name="Ji Z."/>
            <person name="Zhao W."/>
            <person name="Sun Y."/>
            <person name="Zhang Z."/>
            <person name="Bao J."/>
            <person name="Han Y."/>
            <person name="Dong L."/>
            <person name="Ji J."/>
            <person name="Chen P."/>
            <person name="Wu S."/>
            <person name="Liu J."/>
            <person name="Xiao Y."/>
            <person name="Bu D."/>
            <person name="Tan J."/>
            <person name="Yang L."/>
            <person name="Ye C."/>
            <person name="Zhang J."/>
            <person name="Xu J."/>
            <person name="Zhou Y."/>
            <person name="Yu Y."/>
            <person name="Zhang B."/>
            <person name="Zhuang S."/>
            <person name="Wei H."/>
            <person name="Liu B."/>
            <person name="Lei M."/>
            <person name="Yu H."/>
            <person name="Li Y."/>
            <person name="Xu H."/>
            <person name="Wei S."/>
            <person name="He X."/>
            <person name="Fang L."/>
            <person name="Zhang Z."/>
            <person name="Zhang Y."/>
            <person name="Huang X."/>
            <person name="Su Z."/>
            <person name="Tong W."/>
            <person name="Li J."/>
            <person name="Tong Z."/>
            <person name="Li S."/>
            <person name="Ye J."/>
            <person name="Wang L."/>
            <person name="Fang L."/>
            <person name="Lei T."/>
            <person name="Chen C.-S."/>
            <person name="Chen H.-C."/>
            <person name="Xu Z."/>
            <person name="Li H."/>
            <person name="Huang H."/>
            <person name="Zhang F."/>
            <person name="Xu H."/>
            <person name="Li N."/>
            <person name="Zhao C."/>
            <person name="Li S."/>
            <person name="Dong L."/>
            <person name="Huang Y."/>
            <person name="Li L."/>
            <person name="Xi Y."/>
            <person name="Qi Q."/>
            <person name="Li W."/>
            <person name="Zhang B."/>
            <person name="Hu W."/>
            <person name="Zhang Y."/>
            <person name="Tian X."/>
            <person name="Jiao Y."/>
            <person name="Liang X."/>
            <person name="Jin J."/>
            <person name="Gao L."/>
            <person name="Zheng W."/>
            <person name="Hao B."/>
            <person name="Liu S.-M."/>
            <person name="Wang W."/>
            <person name="Yuan L."/>
            <person name="Cao M."/>
            <person name="McDermott J."/>
            <person name="Samudrala R."/>
            <person name="Wang J."/>
            <person name="Wong G.K.-S."/>
            <person name="Yang H."/>
        </authorList>
    </citation>
    <scope>NUCLEOTIDE SEQUENCE [LARGE SCALE GENOMIC DNA]</scope>
    <source>
        <strain>cv. Nipponbare</strain>
    </source>
</reference>
<reference key="5">
    <citation type="journal article" date="2009" name="Plant Cell Rep.">
        <title>Molecular analyses of the rice glutamate dehydrogenase gene family and their response to nitrogen and phosphorous deprivation.</title>
        <authorList>
            <person name="Qiu X."/>
            <person name="Xie W."/>
            <person name="Lian X."/>
            <person name="Zhang Q."/>
        </authorList>
    </citation>
    <scope>TISSUE SPECIFICITY</scope>
    <scope>INDUCTION BY NITROGEN DEPRIVATION</scope>
</reference>
<reference key="6">
    <citation type="journal article" date="2012" name="BMC Plant Biol.">
        <title>Effects of salt stress on ion balance and nitrogen metabolism of old and young leaves in rice (Oryza sativa L.).</title>
        <authorList>
            <person name="Wang H."/>
            <person name="Zhang M."/>
            <person name="Guo R."/>
            <person name="Shi D."/>
            <person name="Liu B."/>
            <person name="Lin X."/>
            <person name="Yang C."/>
        </authorList>
    </citation>
    <scope>INDUCTION BY SALT STRESS</scope>
</reference>
<reference key="7">
    <citation type="journal article" date="2012" name="PLoS ONE">
        <title>Comparison of ion balance and nitrogen metabolism in old and young leaves of alkali-stressed rice plants.</title>
        <authorList>
            <person name="Wang H."/>
            <person name="Wu Z."/>
            <person name="Han J."/>
            <person name="Zheng W."/>
            <person name="Yang C."/>
        </authorList>
    </citation>
    <scope>INDUCTION BY ALKALI STRESS</scope>
</reference>
<reference key="8">
    <citation type="journal article" date="2013" name="New Phytol.">
        <title>Indeterminate domain 10 regulates ammonium-mediated gene expression in rice roots.</title>
        <authorList>
            <person name="Xuan Y.H."/>
            <person name="Priatama R.A."/>
            <person name="Huang J."/>
            <person name="Je B.I."/>
            <person name="Liu J.M."/>
            <person name="Park S.J."/>
            <person name="Piao H.L."/>
            <person name="Son D.Y."/>
            <person name="Lee J.J."/>
            <person name="Park S.H."/>
            <person name="Jung K.H."/>
            <person name="Kim T.H."/>
            <person name="Han C.D."/>
        </authorList>
    </citation>
    <scope>INDUCTION BY IDD10</scope>
</reference>
<reference key="9">
    <citation type="journal article" date="2013" name="Plant Signal. Behav.">
        <title>Regulatory role of indeterminate domain 10 (IDD10) in ammonium-dependent gene expression in rice roots.</title>
        <authorList>
            <person name="Xuan Y.H."/>
            <person name="Priatama R.A."/>
            <person name="Kumar V."/>
            <person name="Han C.D."/>
        </authorList>
    </citation>
    <scope>INDUCTION BY IDD10</scope>
</reference>
<reference key="10">
    <citation type="journal article" date="2015" name="PLoS ONE">
        <title>Analysis of stress-responsive gene expression in cultivated and weedy rice differing in cold stress tolerance.</title>
        <authorList>
            <person name="Bevilacqua C.B."/>
            <person name="Basu S."/>
            <person name="Pereira A."/>
            <person name="Tseng T.-M."/>
            <person name="Zimmer P.D."/>
            <person name="Burgos N.R."/>
        </authorList>
    </citation>
    <scope>INDUCTION BY COLD</scope>
</reference>
<feature type="transit peptide" description="Mitochondrion" evidence="1">
    <location>
        <begin position="1"/>
        <end position="18"/>
    </location>
</feature>
<feature type="chain" id="PRO_0000437579" description="Glutamate dehydrogenase 2, mitochondrial">
    <location>
        <begin position="19"/>
        <end position="411"/>
    </location>
</feature>
<feature type="active site" evidence="2">
    <location>
        <position position="102"/>
    </location>
</feature>
<feature type="sequence conflict" description="In Ref. 4; EEE61431." evidence="10" ref="4">
    <original>A</original>
    <variation>P</variation>
    <location>
        <position position="15"/>
    </location>
</feature>
<feature type="sequence conflict" description="In Ref. 4; EEE61431." evidence="10" ref="4">
    <original>D</original>
    <variation>E</variation>
    <location>
        <position position="21"/>
    </location>
</feature>
<feature type="sequence conflict" description="In Ref. 4; EEE61431." evidence="10" ref="4">
    <original>R</original>
    <variation>P</variation>
    <location>
        <position position="33"/>
    </location>
</feature>
<proteinExistence type="evidence at transcript level"/>
<gene>
    <name type="primary">GDH2</name>
    <name evidence="10" type="ordered locus">LOC_Os04g45970</name>
    <name evidence="11" type="ordered locus">Os04g0543900</name>
    <name evidence="11" type="ORF">OSNPB_040543900</name>
</gene>
<organism>
    <name type="scientific">Oryza sativa subsp. japonica</name>
    <name type="common">Rice</name>
    <dbReference type="NCBI Taxonomy" id="39947"/>
    <lineage>
        <taxon>Eukaryota</taxon>
        <taxon>Viridiplantae</taxon>
        <taxon>Streptophyta</taxon>
        <taxon>Embryophyta</taxon>
        <taxon>Tracheophyta</taxon>
        <taxon>Spermatophyta</taxon>
        <taxon>Magnoliopsida</taxon>
        <taxon>Liliopsida</taxon>
        <taxon>Poales</taxon>
        <taxon>Poaceae</taxon>
        <taxon>BOP clade</taxon>
        <taxon>Oryzoideae</taxon>
        <taxon>Oryzeae</taxon>
        <taxon>Oryzinae</taxon>
        <taxon>Oryza</taxon>
        <taxon>Oryza sativa</taxon>
    </lineage>
</organism>
<comment type="catalytic activity">
    <reaction evidence="2">
        <text>L-glutamate + NAD(+) + H2O = 2-oxoglutarate + NH4(+) + NADH + H(+)</text>
        <dbReference type="Rhea" id="RHEA:15133"/>
        <dbReference type="ChEBI" id="CHEBI:15377"/>
        <dbReference type="ChEBI" id="CHEBI:15378"/>
        <dbReference type="ChEBI" id="CHEBI:16810"/>
        <dbReference type="ChEBI" id="CHEBI:28938"/>
        <dbReference type="ChEBI" id="CHEBI:29985"/>
        <dbReference type="ChEBI" id="CHEBI:57540"/>
        <dbReference type="ChEBI" id="CHEBI:57945"/>
        <dbReference type="EC" id="1.4.1.3"/>
    </reaction>
</comment>
<comment type="catalytic activity">
    <reaction evidence="2">
        <text>L-glutamate + NADP(+) + H2O = 2-oxoglutarate + NH4(+) + NADPH + H(+)</text>
        <dbReference type="Rhea" id="RHEA:11612"/>
        <dbReference type="ChEBI" id="CHEBI:15377"/>
        <dbReference type="ChEBI" id="CHEBI:15378"/>
        <dbReference type="ChEBI" id="CHEBI:16810"/>
        <dbReference type="ChEBI" id="CHEBI:28938"/>
        <dbReference type="ChEBI" id="CHEBI:29985"/>
        <dbReference type="ChEBI" id="CHEBI:57783"/>
        <dbReference type="ChEBI" id="CHEBI:58349"/>
        <dbReference type="EC" id="1.4.1.3"/>
    </reaction>
</comment>
<comment type="subcellular location">
    <subcellularLocation>
        <location evidence="1">Mitochondrion</location>
    </subcellularLocation>
</comment>
<comment type="tissue specificity">
    <text evidence="3 4">Expressed in roots (PubMed:16120687). Expressed ubiquitously in various tissues (PubMed:19430792).</text>
</comment>
<comment type="developmental stage">
    <text evidence="3">Detected in the region of the apical meristem and cortical cells in the tip region and elongation zone of the roots.</text>
</comment>
<comment type="induction">
    <text evidence="3 4 5 6 7 8 9">Slightly induced by NH(4)Cl and NH(4)NO(3) (PubMed:16120687). Induced in shoots after nitrogen (N-deprivation) deprivation. In roots, first transiently repressed but later induced by N-deprivation (PubMed:19430792). Induced by alkali stress (PubMed:22655071). Up-regulated by salt stress in old leaves (PubMed:23082824). Activated by IDD10 in the presence of NH(4)+ ions (PubMed:23278238, PubMed:23470720). Induced by cold stress (i.e. 10 degrees Celsius) (PubMed:26230579).</text>
</comment>
<comment type="similarity">
    <text evidence="10">Belongs to the Glu/Leu/Phe/Val dehydrogenases family.</text>
</comment>
<keyword id="KW-0496">Mitochondrion</keyword>
<keyword id="KW-0520">NAD</keyword>
<keyword id="KW-0521">NADP</keyword>
<keyword id="KW-0560">Oxidoreductase</keyword>
<keyword id="KW-1185">Reference proteome</keyword>
<keyword id="KW-0809">Transit peptide</keyword>
<dbReference type="EC" id="1.4.1.3" evidence="2"/>
<dbReference type="EMBL" id="AB189166">
    <property type="protein sequence ID" value="BAE48298.1"/>
    <property type="molecule type" value="mRNA"/>
</dbReference>
<dbReference type="EMBL" id="AP014960">
    <property type="protein sequence ID" value="BAS90319.1"/>
    <property type="molecule type" value="Genomic_DNA"/>
</dbReference>
<dbReference type="EMBL" id="CM000141">
    <property type="protein sequence ID" value="EEE61431.1"/>
    <property type="molecule type" value="Genomic_DNA"/>
</dbReference>
<dbReference type="RefSeq" id="XP_015637000.1">
    <property type="nucleotide sequence ID" value="XM_015781514.1"/>
</dbReference>
<dbReference type="SMR" id="Q33E23"/>
<dbReference type="FunCoup" id="Q33E23">
    <property type="interactions" value="2001"/>
</dbReference>
<dbReference type="STRING" id="39947.Q33E23"/>
<dbReference type="PaxDb" id="39947-Q33E23"/>
<dbReference type="EnsemblPlants" id="Os04t0543900-02">
    <property type="protein sequence ID" value="Os04t0543900-02"/>
    <property type="gene ID" value="Os04g0543900"/>
</dbReference>
<dbReference type="Gramene" id="Os04t0543900-02">
    <property type="protein sequence ID" value="Os04t0543900-02"/>
    <property type="gene ID" value="Os04g0543900"/>
</dbReference>
<dbReference type="eggNOG" id="KOG2250">
    <property type="taxonomic scope" value="Eukaryota"/>
</dbReference>
<dbReference type="HOGENOM" id="CLU_025763_1_2_1"/>
<dbReference type="InParanoid" id="Q33E23"/>
<dbReference type="OMA" id="WMVYKCA"/>
<dbReference type="OrthoDB" id="6718861at2759"/>
<dbReference type="Proteomes" id="UP000007752">
    <property type="component" value="Chromosome 4"/>
</dbReference>
<dbReference type="Proteomes" id="UP000059680">
    <property type="component" value="Chromosome 4"/>
</dbReference>
<dbReference type="ExpressionAtlas" id="Q33E23">
    <property type="expression patterns" value="baseline and differential"/>
</dbReference>
<dbReference type="GO" id="GO:0005739">
    <property type="term" value="C:mitochondrion"/>
    <property type="evidence" value="ECO:0000318"/>
    <property type="project" value="GO_Central"/>
</dbReference>
<dbReference type="GO" id="GO:0004352">
    <property type="term" value="F:glutamate dehydrogenase (NAD+) activity"/>
    <property type="evidence" value="ECO:0000318"/>
    <property type="project" value="GO_Central"/>
</dbReference>
<dbReference type="GO" id="GO:0004354">
    <property type="term" value="F:glutamate dehydrogenase (NADP+) activity"/>
    <property type="evidence" value="ECO:0007669"/>
    <property type="project" value="RHEA"/>
</dbReference>
<dbReference type="GO" id="GO:0006995">
    <property type="term" value="P:cellular response to nitrogen starvation"/>
    <property type="evidence" value="ECO:0000270"/>
    <property type="project" value="UniProtKB"/>
</dbReference>
<dbReference type="GO" id="GO:0006538">
    <property type="term" value="P:glutamate catabolic process"/>
    <property type="evidence" value="ECO:0000318"/>
    <property type="project" value="GO_Central"/>
</dbReference>
<dbReference type="GO" id="GO:0010446">
    <property type="term" value="P:response to alkaline pH"/>
    <property type="evidence" value="ECO:0000270"/>
    <property type="project" value="UniProtKB"/>
</dbReference>
<dbReference type="GO" id="GO:0009409">
    <property type="term" value="P:response to cold"/>
    <property type="evidence" value="ECO:0000270"/>
    <property type="project" value="UniProtKB"/>
</dbReference>
<dbReference type="GO" id="GO:1901698">
    <property type="term" value="P:response to nitrogen compound"/>
    <property type="evidence" value="ECO:0000270"/>
    <property type="project" value="UniProtKB"/>
</dbReference>
<dbReference type="GO" id="GO:0009651">
    <property type="term" value="P:response to salt stress"/>
    <property type="evidence" value="ECO:0000270"/>
    <property type="project" value="UniProtKB"/>
</dbReference>
<dbReference type="CDD" id="cd01076">
    <property type="entry name" value="NAD_bind_1_Glu_DH"/>
    <property type="match status" value="1"/>
</dbReference>
<dbReference type="FunFam" id="3.40.50.10860:FF:000003">
    <property type="entry name" value="Glutamate dehydrogenase"/>
    <property type="match status" value="1"/>
</dbReference>
<dbReference type="FunFam" id="3.40.50.720:FF:000212">
    <property type="entry name" value="Glutamate dehydrogenase"/>
    <property type="match status" value="1"/>
</dbReference>
<dbReference type="Gene3D" id="3.40.50.10860">
    <property type="entry name" value="Leucine Dehydrogenase, chain A, domain 1"/>
    <property type="match status" value="1"/>
</dbReference>
<dbReference type="Gene3D" id="3.40.50.720">
    <property type="entry name" value="NAD(P)-binding Rossmann-like Domain"/>
    <property type="match status" value="1"/>
</dbReference>
<dbReference type="InterPro" id="IPR046346">
    <property type="entry name" value="Aminoacid_DH-like_N_sf"/>
</dbReference>
<dbReference type="InterPro" id="IPR006095">
    <property type="entry name" value="Glu/Leu/Phe/Val/Trp_DH"/>
</dbReference>
<dbReference type="InterPro" id="IPR006096">
    <property type="entry name" value="Glu/Leu/Phe/Val/Trp_DH_C"/>
</dbReference>
<dbReference type="InterPro" id="IPR006097">
    <property type="entry name" value="Glu/Leu/Phe/Val/Trp_DH_dimer"/>
</dbReference>
<dbReference type="InterPro" id="IPR014362">
    <property type="entry name" value="Glu_DH"/>
</dbReference>
<dbReference type="InterPro" id="IPR036291">
    <property type="entry name" value="NAD(P)-bd_dom_sf"/>
</dbReference>
<dbReference type="InterPro" id="IPR033922">
    <property type="entry name" value="NAD_bind_Glu_DH"/>
</dbReference>
<dbReference type="PANTHER" id="PTHR11606">
    <property type="entry name" value="GLUTAMATE DEHYDROGENASE"/>
    <property type="match status" value="1"/>
</dbReference>
<dbReference type="PANTHER" id="PTHR11606:SF24">
    <property type="entry name" value="NAD-SPECIFIC GLUTAMATE DEHYDROGENASE"/>
    <property type="match status" value="1"/>
</dbReference>
<dbReference type="Pfam" id="PF00208">
    <property type="entry name" value="ELFV_dehydrog"/>
    <property type="match status" value="1"/>
</dbReference>
<dbReference type="Pfam" id="PF02812">
    <property type="entry name" value="ELFV_dehydrog_N"/>
    <property type="match status" value="1"/>
</dbReference>
<dbReference type="PIRSF" id="PIRSF000185">
    <property type="entry name" value="Glu_DH"/>
    <property type="match status" value="1"/>
</dbReference>
<dbReference type="PRINTS" id="PR00082">
    <property type="entry name" value="GLFDHDRGNASE"/>
</dbReference>
<dbReference type="SMART" id="SM00839">
    <property type="entry name" value="ELFV_dehydrog"/>
    <property type="match status" value="1"/>
</dbReference>
<dbReference type="SUPFAM" id="SSF53223">
    <property type="entry name" value="Aminoacid dehydrogenase-like, N-terminal domain"/>
    <property type="match status" value="1"/>
</dbReference>
<dbReference type="SUPFAM" id="SSF51735">
    <property type="entry name" value="NAD(P)-binding Rossmann-fold domains"/>
    <property type="match status" value="1"/>
</dbReference>
<sequence length="411" mass="44551">MNALAATSRNFRQAARLLGLDSKLEKSLLIPFREIKVECTIPKDDGTLASFIGFRVQHDNARGPMKGGIRYHPEVDPDEVNALAQLMTWKTAVAAIPYGGAKGGIGCAPGELSTSELERLTRVFTQKIHDLIGAHTDVPAPDMGTNSQTMAWILDEYSKFHGHSPAVVTGKPIDLGGSLGRDAATGRGVMYATEALLAEHGKSISGSTFVIQGFGNVGSWAARIIHEKGGKVIALGDVTGSIRNKNGLDIPALMKHRNEGGALKDFHDAEVMDSSELLVHECDVLIPCALGGVLNRENAPDVKAKFIIEAANHPTDPEADEILAKKGVTILPDIYANSGGVIVSYFEWVQNIQGFMWDEEKVNMELHKYMNNSFQHIKAMCKSHDCNLRMGAFTLGVNRVARATLLRGWEA</sequence>